<name>ISPH_PHOV8</name>
<dbReference type="EC" id="1.17.7.4" evidence="1"/>
<dbReference type="EMBL" id="CP000139">
    <property type="protein sequence ID" value="ABR39609.1"/>
    <property type="molecule type" value="Genomic_DNA"/>
</dbReference>
<dbReference type="RefSeq" id="WP_005845847.1">
    <property type="nucleotide sequence ID" value="NZ_JANSWM010000118.1"/>
</dbReference>
<dbReference type="SMR" id="A6L1P5"/>
<dbReference type="STRING" id="435590.BVU_1936"/>
<dbReference type="PaxDb" id="435590-BVU_1936"/>
<dbReference type="GeneID" id="5302902"/>
<dbReference type="KEGG" id="bvu:BVU_1936"/>
<dbReference type="eggNOG" id="COG0761">
    <property type="taxonomic scope" value="Bacteria"/>
</dbReference>
<dbReference type="HOGENOM" id="CLU_027486_0_1_10"/>
<dbReference type="BioCyc" id="BVUL435590:G1G59-2027-MONOMER"/>
<dbReference type="UniPathway" id="UPA00056">
    <property type="reaction ID" value="UER00097"/>
</dbReference>
<dbReference type="UniPathway" id="UPA00059">
    <property type="reaction ID" value="UER00105"/>
</dbReference>
<dbReference type="Proteomes" id="UP000002861">
    <property type="component" value="Chromosome"/>
</dbReference>
<dbReference type="GO" id="GO:0051539">
    <property type="term" value="F:4 iron, 4 sulfur cluster binding"/>
    <property type="evidence" value="ECO:0007669"/>
    <property type="project" value="UniProtKB-UniRule"/>
</dbReference>
<dbReference type="GO" id="GO:0051745">
    <property type="term" value="F:4-hydroxy-3-methylbut-2-enyl diphosphate reductase activity"/>
    <property type="evidence" value="ECO:0007669"/>
    <property type="project" value="UniProtKB-UniRule"/>
</dbReference>
<dbReference type="GO" id="GO:0046872">
    <property type="term" value="F:metal ion binding"/>
    <property type="evidence" value="ECO:0007669"/>
    <property type="project" value="UniProtKB-KW"/>
</dbReference>
<dbReference type="GO" id="GO:0050992">
    <property type="term" value="P:dimethylallyl diphosphate biosynthetic process"/>
    <property type="evidence" value="ECO:0007669"/>
    <property type="project" value="UniProtKB-UniRule"/>
</dbReference>
<dbReference type="GO" id="GO:0019288">
    <property type="term" value="P:isopentenyl diphosphate biosynthetic process, methylerythritol 4-phosphate pathway"/>
    <property type="evidence" value="ECO:0007669"/>
    <property type="project" value="UniProtKB-UniRule"/>
</dbReference>
<dbReference type="GO" id="GO:0016114">
    <property type="term" value="P:terpenoid biosynthetic process"/>
    <property type="evidence" value="ECO:0007669"/>
    <property type="project" value="UniProtKB-UniRule"/>
</dbReference>
<dbReference type="CDD" id="cd13944">
    <property type="entry name" value="lytB_ispH"/>
    <property type="match status" value="1"/>
</dbReference>
<dbReference type="Gene3D" id="3.40.50.11270">
    <property type="match status" value="1"/>
</dbReference>
<dbReference type="Gene3D" id="3.40.1010.20">
    <property type="entry name" value="4-hydroxy-3-methylbut-2-enyl diphosphate reductase, catalytic domain"/>
    <property type="match status" value="2"/>
</dbReference>
<dbReference type="HAMAP" id="MF_00191">
    <property type="entry name" value="IspH"/>
    <property type="match status" value="1"/>
</dbReference>
<dbReference type="InterPro" id="IPR003451">
    <property type="entry name" value="LytB/IspH"/>
</dbReference>
<dbReference type="NCBIfam" id="TIGR00216">
    <property type="entry name" value="ispH_lytB"/>
    <property type="match status" value="1"/>
</dbReference>
<dbReference type="NCBIfam" id="NF002187">
    <property type="entry name" value="PRK01045.1-1"/>
    <property type="match status" value="1"/>
</dbReference>
<dbReference type="PANTHER" id="PTHR30426">
    <property type="entry name" value="4-HYDROXY-3-METHYLBUT-2-ENYL DIPHOSPHATE REDUCTASE"/>
    <property type="match status" value="1"/>
</dbReference>
<dbReference type="PANTHER" id="PTHR30426:SF0">
    <property type="entry name" value="4-HYDROXY-3-METHYLBUT-2-ENYL DIPHOSPHATE REDUCTASE"/>
    <property type="match status" value="1"/>
</dbReference>
<dbReference type="Pfam" id="PF02401">
    <property type="entry name" value="LYTB"/>
    <property type="match status" value="1"/>
</dbReference>
<reference key="1">
    <citation type="journal article" date="2007" name="PLoS Biol.">
        <title>Evolution of symbiotic bacteria in the distal human intestine.</title>
        <authorList>
            <person name="Xu J."/>
            <person name="Mahowald M.A."/>
            <person name="Ley R.E."/>
            <person name="Lozupone C.A."/>
            <person name="Hamady M."/>
            <person name="Martens E.C."/>
            <person name="Henrissat B."/>
            <person name="Coutinho P.M."/>
            <person name="Minx P."/>
            <person name="Latreille P."/>
            <person name="Cordum H."/>
            <person name="Van Brunt A."/>
            <person name="Kim K."/>
            <person name="Fulton R.S."/>
            <person name="Fulton L.A."/>
            <person name="Clifton S.W."/>
            <person name="Wilson R.K."/>
            <person name="Knight R.D."/>
            <person name="Gordon J.I."/>
        </authorList>
    </citation>
    <scope>NUCLEOTIDE SEQUENCE [LARGE SCALE GENOMIC DNA]</scope>
    <source>
        <strain>ATCC 8482 / DSM 1447 / JCM 5826 / CCUG 4940 / NBRC 14291 / NCTC 11154</strain>
    </source>
</reference>
<sequence length="288" mass="32598">MVNIEIDEGSGFCFGVTTAIRKAEEELAKGNTLYCLGDIVHNGQECERLKKMGLITINHEEFAQLHDAKVLLRAHGEPPETYAIARTNNIEIIDATCPVVLRLQKRIKQEYDNVPASQDTQIVIYGKNGHAEVLGLVGQTHGKAIVIETPAEAAHLDFTKDIRLYSQTTKSLEEFWQIIEYIKEHISPDATFEYYDTICRQVANRMPNIRKFAAAHDLIFFVCGRKSSNGKILYQECKKINPNSYLIDQPEEIDRNLLEDVRSIGICGATSTPKWLMEECKKAILNEK</sequence>
<protein>
    <recommendedName>
        <fullName evidence="1">4-hydroxy-3-methylbut-2-enyl diphosphate reductase</fullName>
        <shortName evidence="1">HMBPP reductase</shortName>
        <ecNumber evidence="1">1.17.7.4</ecNumber>
    </recommendedName>
</protein>
<feature type="chain" id="PRO_1000021089" description="4-hydroxy-3-methylbut-2-enyl diphosphate reductase">
    <location>
        <begin position="1"/>
        <end position="288"/>
    </location>
</feature>
<feature type="active site" description="Proton donor" evidence="1">
    <location>
        <position position="132"/>
    </location>
</feature>
<feature type="binding site" evidence="1">
    <location>
        <position position="13"/>
    </location>
    <ligand>
        <name>[4Fe-4S] cluster</name>
        <dbReference type="ChEBI" id="CHEBI:49883"/>
    </ligand>
</feature>
<feature type="binding site" evidence="1">
    <location>
        <position position="41"/>
    </location>
    <ligand>
        <name>(2E)-4-hydroxy-3-methylbut-2-enyl diphosphate</name>
        <dbReference type="ChEBI" id="CHEBI:128753"/>
    </ligand>
</feature>
<feature type="binding site" evidence="1">
    <location>
        <position position="41"/>
    </location>
    <ligand>
        <name>dimethylallyl diphosphate</name>
        <dbReference type="ChEBI" id="CHEBI:57623"/>
    </ligand>
</feature>
<feature type="binding site" evidence="1">
    <location>
        <position position="41"/>
    </location>
    <ligand>
        <name>isopentenyl diphosphate</name>
        <dbReference type="ChEBI" id="CHEBI:128769"/>
    </ligand>
</feature>
<feature type="binding site" evidence="1">
    <location>
        <position position="75"/>
    </location>
    <ligand>
        <name>(2E)-4-hydroxy-3-methylbut-2-enyl diphosphate</name>
        <dbReference type="ChEBI" id="CHEBI:128753"/>
    </ligand>
</feature>
<feature type="binding site" evidence="1">
    <location>
        <position position="75"/>
    </location>
    <ligand>
        <name>dimethylallyl diphosphate</name>
        <dbReference type="ChEBI" id="CHEBI:57623"/>
    </ligand>
</feature>
<feature type="binding site" evidence="1">
    <location>
        <position position="75"/>
    </location>
    <ligand>
        <name>isopentenyl diphosphate</name>
        <dbReference type="ChEBI" id="CHEBI:128769"/>
    </ligand>
</feature>
<feature type="binding site" evidence="1">
    <location>
        <position position="97"/>
    </location>
    <ligand>
        <name>[4Fe-4S] cluster</name>
        <dbReference type="ChEBI" id="CHEBI:49883"/>
    </ligand>
</feature>
<feature type="binding site" evidence="1">
    <location>
        <position position="130"/>
    </location>
    <ligand>
        <name>(2E)-4-hydroxy-3-methylbut-2-enyl diphosphate</name>
        <dbReference type="ChEBI" id="CHEBI:128753"/>
    </ligand>
</feature>
<feature type="binding site" evidence="1">
    <location>
        <position position="130"/>
    </location>
    <ligand>
        <name>dimethylallyl diphosphate</name>
        <dbReference type="ChEBI" id="CHEBI:57623"/>
    </ligand>
</feature>
<feature type="binding site" evidence="1">
    <location>
        <position position="130"/>
    </location>
    <ligand>
        <name>isopentenyl diphosphate</name>
        <dbReference type="ChEBI" id="CHEBI:128769"/>
    </ligand>
</feature>
<feature type="binding site" evidence="1">
    <location>
        <position position="168"/>
    </location>
    <ligand>
        <name>(2E)-4-hydroxy-3-methylbut-2-enyl diphosphate</name>
        <dbReference type="ChEBI" id="CHEBI:128753"/>
    </ligand>
</feature>
<feature type="binding site" evidence="1">
    <location>
        <position position="199"/>
    </location>
    <ligand>
        <name>[4Fe-4S] cluster</name>
        <dbReference type="ChEBI" id="CHEBI:49883"/>
    </ligand>
</feature>
<feature type="binding site" evidence="1">
    <location>
        <position position="227"/>
    </location>
    <ligand>
        <name>(2E)-4-hydroxy-3-methylbut-2-enyl diphosphate</name>
        <dbReference type="ChEBI" id="CHEBI:128753"/>
    </ligand>
</feature>
<feature type="binding site" evidence="1">
    <location>
        <position position="227"/>
    </location>
    <ligand>
        <name>dimethylallyl diphosphate</name>
        <dbReference type="ChEBI" id="CHEBI:57623"/>
    </ligand>
</feature>
<feature type="binding site" evidence="1">
    <location>
        <position position="227"/>
    </location>
    <ligand>
        <name>isopentenyl diphosphate</name>
        <dbReference type="ChEBI" id="CHEBI:128769"/>
    </ligand>
</feature>
<feature type="binding site" evidence="1">
    <location>
        <position position="228"/>
    </location>
    <ligand>
        <name>(2E)-4-hydroxy-3-methylbut-2-enyl diphosphate</name>
        <dbReference type="ChEBI" id="CHEBI:128753"/>
    </ligand>
</feature>
<feature type="binding site" evidence="1">
    <location>
        <position position="228"/>
    </location>
    <ligand>
        <name>dimethylallyl diphosphate</name>
        <dbReference type="ChEBI" id="CHEBI:57623"/>
    </ligand>
</feature>
<feature type="binding site" evidence="1">
    <location>
        <position position="228"/>
    </location>
    <ligand>
        <name>isopentenyl diphosphate</name>
        <dbReference type="ChEBI" id="CHEBI:128769"/>
    </ligand>
</feature>
<feature type="binding site" evidence="1">
    <location>
        <position position="229"/>
    </location>
    <ligand>
        <name>(2E)-4-hydroxy-3-methylbut-2-enyl diphosphate</name>
        <dbReference type="ChEBI" id="CHEBI:128753"/>
    </ligand>
</feature>
<feature type="binding site" evidence="1">
    <location>
        <position position="229"/>
    </location>
    <ligand>
        <name>dimethylallyl diphosphate</name>
        <dbReference type="ChEBI" id="CHEBI:57623"/>
    </ligand>
</feature>
<feature type="binding site" evidence="1">
    <location>
        <position position="229"/>
    </location>
    <ligand>
        <name>isopentenyl diphosphate</name>
        <dbReference type="ChEBI" id="CHEBI:128769"/>
    </ligand>
</feature>
<feature type="binding site" evidence="1">
    <location>
        <position position="271"/>
    </location>
    <ligand>
        <name>(2E)-4-hydroxy-3-methylbut-2-enyl diphosphate</name>
        <dbReference type="ChEBI" id="CHEBI:128753"/>
    </ligand>
</feature>
<feature type="binding site" evidence="1">
    <location>
        <position position="271"/>
    </location>
    <ligand>
        <name>dimethylallyl diphosphate</name>
        <dbReference type="ChEBI" id="CHEBI:57623"/>
    </ligand>
</feature>
<feature type="binding site" evidence="1">
    <location>
        <position position="271"/>
    </location>
    <ligand>
        <name>isopentenyl diphosphate</name>
        <dbReference type="ChEBI" id="CHEBI:128769"/>
    </ligand>
</feature>
<organism>
    <name type="scientific">Phocaeicola vulgatus (strain ATCC 8482 / DSM 1447 / JCM 5826 / CCUG 4940 / NBRC 14291 / NCTC 11154)</name>
    <name type="common">Bacteroides vulgatus</name>
    <dbReference type="NCBI Taxonomy" id="435590"/>
    <lineage>
        <taxon>Bacteria</taxon>
        <taxon>Pseudomonadati</taxon>
        <taxon>Bacteroidota</taxon>
        <taxon>Bacteroidia</taxon>
        <taxon>Bacteroidales</taxon>
        <taxon>Bacteroidaceae</taxon>
        <taxon>Phocaeicola</taxon>
    </lineage>
</organism>
<evidence type="ECO:0000255" key="1">
    <source>
        <dbReference type="HAMAP-Rule" id="MF_00191"/>
    </source>
</evidence>
<gene>
    <name evidence="1" type="primary">ispH</name>
    <name type="ordered locus">BVU_1936</name>
</gene>
<accession>A6L1P5</accession>
<keyword id="KW-0004">4Fe-4S</keyword>
<keyword id="KW-0408">Iron</keyword>
<keyword id="KW-0411">Iron-sulfur</keyword>
<keyword id="KW-0414">Isoprene biosynthesis</keyword>
<keyword id="KW-0479">Metal-binding</keyword>
<keyword id="KW-0560">Oxidoreductase</keyword>
<proteinExistence type="inferred from homology"/>
<comment type="function">
    <text evidence="1">Catalyzes the conversion of 1-hydroxy-2-methyl-2-(E)-butenyl 4-diphosphate (HMBPP) into a mixture of isopentenyl diphosphate (IPP) and dimethylallyl diphosphate (DMAPP). Acts in the terminal step of the DOXP/MEP pathway for isoprenoid precursor biosynthesis.</text>
</comment>
<comment type="catalytic activity">
    <reaction evidence="1">
        <text>isopentenyl diphosphate + 2 oxidized [2Fe-2S]-[ferredoxin] + H2O = (2E)-4-hydroxy-3-methylbut-2-enyl diphosphate + 2 reduced [2Fe-2S]-[ferredoxin] + 2 H(+)</text>
        <dbReference type="Rhea" id="RHEA:24488"/>
        <dbReference type="Rhea" id="RHEA-COMP:10000"/>
        <dbReference type="Rhea" id="RHEA-COMP:10001"/>
        <dbReference type="ChEBI" id="CHEBI:15377"/>
        <dbReference type="ChEBI" id="CHEBI:15378"/>
        <dbReference type="ChEBI" id="CHEBI:33737"/>
        <dbReference type="ChEBI" id="CHEBI:33738"/>
        <dbReference type="ChEBI" id="CHEBI:128753"/>
        <dbReference type="ChEBI" id="CHEBI:128769"/>
        <dbReference type="EC" id="1.17.7.4"/>
    </reaction>
</comment>
<comment type="catalytic activity">
    <reaction evidence="1">
        <text>dimethylallyl diphosphate + 2 oxidized [2Fe-2S]-[ferredoxin] + H2O = (2E)-4-hydroxy-3-methylbut-2-enyl diphosphate + 2 reduced [2Fe-2S]-[ferredoxin] + 2 H(+)</text>
        <dbReference type="Rhea" id="RHEA:24825"/>
        <dbReference type="Rhea" id="RHEA-COMP:10000"/>
        <dbReference type="Rhea" id="RHEA-COMP:10001"/>
        <dbReference type="ChEBI" id="CHEBI:15377"/>
        <dbReference type="ChEBI" id="CHEBI:15378"/>
        <dbReference type="ChEBI" id="CHEBI:33737"/>
        <dbReference type="ChEBI" id="CHEBI:33738"/>
        <dbReference type="ChEBI" id="CHEBI:57623"/>
        <dbReference type="ChEBI" id="CHEBI:128753"/>
        <dbReference type="EC" id="1.17.7.4"/>
    </reaction>
</comment>
<comment type="cofactor">
    <cofactor evidence="1">
        <name>[4Fe-4S] cluster</name>
        <dbReference type="ChEBI" id="CHEBI:49883"/>
    </cofactor>
    <text evidence="1">Binds 1 [4Fe-4S] cluster per subunit.</text>
</comment>
<comment type="pathway">
    <text evidence="1">Isoprenoid biosynthesis; dimethylallyl diphosphate biosynthesis; dimethylallyl diphosphate from (2E)-4-hydroxy-3-methylbutenyl diphosphate: step 1/1.</text>
</comment>
<comment type="pathway">
    <text evidence="1">Isoprenoid biosynthesis; isopentenyl diphosphate biosynthesis via DXP pathway; isopentenyl diphosphate from 1-deoxy-D-xylulose 5-phosphate: step 6/6.</text>
</comment>
<comment type="similarity">
    <text evidence="1">Belongs to the IspH family.</text>
</comment>